<proteinExistence type="inferred from homology"/>
<comment type="function">
    <text evidence="1">One of the primary rRNA binding proteins, it binds directly to 16S rRNA where it helps nucleate assembly of the platform of the 30S subunit by binding and bridging several RNA helices of the 16S rRNA.</text>
</comment>
<comment type="function">
    <text evidence="1">Forms an intersubunit bridge (bridge B4) with the 23S rRNA of the 50S subunit in the ribosome.</text>
</comment>
<comment type="subunit">
    <text evidence="1">Part of the 30S ribosomal subunit. Forms a bridge to the 50S subunit in the 70S ribosome, contacting the 23S rRNA.</text>
</comment>
<comment type="similarity">
    <text evidence="1">Belongs to the universal ribosomal protein uS15 family.</text>
</comment>
<reference key="1">
    <citation type="journal article" date="2008" name="BMC Genomics">
        <title>Genome sequence and rapid evolution of the rice pathogen Xanthomonas oryzae pv. oryzae PXO99A.</title>
        <authorList>
            <person name="Salzberg S.L."/>
            <person name="Sommer D.D."/>
            <person name="Schatz M.C."/>
            <person name="Phillippy A.M."/>
            <person name="Rabinowicz P.D."/>
            <person name="Tsuge S."/>
            <person name="Furutani A."/>
            <person name="Ochiai H."/>
            <person name="Delcher A.L."/>
            <person name="Kelley D."/>
            <person name="Madupu R."/>
            <person name="Puiu D."/>
            <person name="Radune D."/>
            <person name="Shumway M."/>
            <person name="Trapnell C."/>
            <person name="Aparna G."/>
            <person name="Jha G."/>
            <person name="Pandey A."/>
            <person name="Patil P.B."/>
            <person name="Ishihara H."/>
            <person name="Meyer D.F."/>
            <person name="Szurek B."/>
            <person name="Verdier V."/>
            <person name="Koebnik R."/>
            <person name="Dow J.M."/>
            <person name="Ryan R.P."/>
            <person name="Hirata H."/>
            <person name="Tsuyumu S."/>
            <person name="Won Lee S."/>
            <person name="Seo Y.-S."/>
            <person name="Sriariyanum M."/>
            <person name="Ronald P.C."/>
            <person name="Sonti R.V."/>
            <person name="Van Sluys M.-A."/>
            <person name="Leach J.E."/>
            <person name="White F.F."/>
            <person name="Bogdanove A.J."/>
        </authorList>
    </citation>
    <scope>NUCLEOTIDE SEQUENCE [LARGE SCALE GENOMIC DNA]</scope>
    <source>
        <strain>PXO99A</strain>
    </source>
</reference>
<sequence length="86" mass="10097">MSVDTQKVIEDNKRSAQDTGSPEVQVALLTARIELLTGHFKTHKKDHHSRRGLLQMVNRRRSLLDYLKKKDNERYKSLIEKLGLRR</sequence>
<keyword id="KW-0687">Ribonucleoprotein</keyword>
<keyword id="KW-0689">Ribosomal protein</keyword>
<keyword id="KW-0694">RNA-binding</keyword>
<keyword id="KW-0699">rRNA-binding</keyword>
<organism>
    <name type="scientific">Xanthomonas oryzae pv. oryzae (strain PXO99A)</name>
    <dbReference type="NCBI Taxonomy" id="360094"/>
    <lineage>
        <taxon>Bacteria</taxon>
        <taxon>Pseudomonadati</taxon>
        <taxon>Pseudomonadota</taxon>
        <taxon>Gammaproteobacteria</taxon>
        <taxon>Lysobacterales</taxon>
        <taxon>Lysobacteraceae</taxon>
        <taxon>Xanthomonas</taxon>
    </lineage>
</organism>
<gene>
    <name evidence="1" type="primary">rpsO</name>
    <name type="ordered locus">PXO_01306</name>
</gene>
<protein>
    <recommendedName>
        <fullName evidence="1">Small ribosomal subunit protein uS15</fullName>
    </recommendedName>
    <alternativeName>
        <fullName evidence="3">30S ribosomal protein S15</fullName>
    </alternativeName>
</protein>
<evidence type="ECO:0000255" key="1">
    <source>
        <dbReference type="HAMAP-Rule" id="MF_01343"/>
    </source>
</evidence>
<evidence type="ECO:0000256" key="2">
    <source>
        <dbReference type="SAM" id="MobiDB-lite"/>
    </source>
</evidence>
<evidence type="ECO:0000305" key="3"/>
<dbReference type="EMBL" id="CP000967">
    <property type="protein sequence ID" value="ACD60074.1"/>
    <property type="molecule type" value="Genomic_DNA"/>
</dbReference>
<dbReference type="RefSeq" id="WP_003485583.1">
    <property type="nucleotide sequence ID" value="NC_010717.2"/>
</dbReference>
<dbReference type="SMR" id="B2SVK0"/>
<dbReference type="GeneID" id="97510971"/>
<dbReference type="KEGG" id="xop:PXO_01306"/>
<dbReference type="eggNOG" id="COG0184">
    <property type="taxonomic scope" value="Bacteria"/>
</dbReference>
<dbReference type="HOGENOM" id="CLU_148518_1_0_6"/>
<dbReference type="Proteomes" id="UP000001740">
    <property type="component" value="Chromosome"/>
</dbReference>
<dbReference type="GO" id="GO:0022627">
    <property type="term" value="C:cytosolic small ribosomal subunit"/>
    <property type="evidence" value="ECO:0007669"/>
    <property type="project" value="TreeGrafter"/>
</dbReference>
<dbReference type="GO" id="GO:0019843">
    <property type="term" value="F:rRNA binding"/>
    <property type="evidence" value="ECO:0007669"/>
    <property type="project" value="UniProtKB-UniRule"/>
</dbReference>
<dbReference type="GO" id="GO:0003735">
    <property type="term" value="F:structural constituent of ribosome"/>
    <property type="evidence" value="ECO:0007669"/>
    <property type="project" value="InterPro"/>
</dbReference>
<dbReference type="GO" id="GO:0006412">
    <property type="term" value="P:translation"/>
    <property type="evidence" value="ECO:0007669"/>
    <property type="project" value="UniProtKB-UniRule"/>
</dbReference>
<dbReference type="CDD" id="cd00353">
    <property type="entry name" value="Ribosomal_S15p_S13e"/>
    <property type="match status" value="1"/>
</dbReference>
<dbReference type="FunFam" id="1.10.287.10:FF:000002">
    <property type="entry name" value="30S ribosomal protein S15"/>
    <property type="match status" value="1"/>
</dbReference>
<dbReference type="Gene3D" id="6.10.250.3130">
    <property type="match status" value="1"/>
</dbReference>
<dbReference type="Gene3D" id="1.10.287.10">
    <property type="entry name" value="S15/NS1, RNA-binding"/>
    <property type="match status" value="1"/>
</dbReference>
<dbReference type="HAMAP" id="MF_01343_B">
    <property type="entry name" value="Ribosomal_uS15_B"/>
    <property type="match status" value="1"/>
</dbReference>
<dbReference type="InterPro" id="IPR000589">
    <property type="entry name" value="Ribosomal_uS15"/>
</dbReference>
<dbReference type="InterPro" id="IPR005290">
    <property type="entry name" value="Ribosomal_uS15_bac-type"/>
</dbReference>
<dbReference type="InterPro" id="IPR009068">
    <property type="entry name" value="uS15_NS1_RNA-bd_sf"/>
</dbReference>
<dbReference type="NCBIfam" id="TIGR00952">
    <property type="entry name" value="S15_bact"/>
    <property type="match status" value="1"/>
</dbReference>
<dbReference type="PANTHER" id="PTHR23321">
    <property type="entry name" value="RIBOSOMAL PROTEIN S15, BACTERIAL AND ORGANELLAR"/>
    <property type="match status" value="1"/>
</dbReference>
<dbReference type="PANTHER" id="PTHR23321:SF26">
    <property type="entry name" value="SMALL RIBOSOMAL SUBUNIT PROTEIN US15M"/>
    <property type="match status" value="1"/>
</dbReference>
<dbReference type="Pfam" id="PF00312">
    <property type="entry name" value="Ribosomal_S15"/>
    <property type="match status" value="1"/>
</dbReference>
<dbReference type="SMART" id="SM01387">
    <property type="entry name" value="Ribosomal_S15"/>
    <property type="match status" value="1"/>
</dbReference>
<dbReference type="SUPFAM" id="SSF47060">
    <property type="entry name" value="S15/NS1 RNA-binding domain"/>
    <property type="match status" value="1"/>
</dbReference>
<dbReference type="PROSITE" id="PS00362">
    <property type="entry name" value="RIBOSOMAL_S15"/>
    <property type="match status" value="1"/>
</dbReference>
<name>RS15_XANOP</name>
<feature type="chain" id="PRO_1000143193" description="Small ribosomal subunit protein uS15">
    <location>
        <begin position="1"/>
        <end position="86"/>
    </location>
</feature>
<feature type="region of interest" description="Disordered" evidence="2">
    <location>
        <begin position="1"/>
        <end position="22"/>
    </location>
</feature>
<feature type="compositionally biased region" description="Basic and acidic residues" evidence="2">
    <location>
        <begin position="7"/>
        <end position="16"/>
    </location>
</feature>
<accession>B2SVK0</accession>